<proteinExistence type="inferred from homology"/>
<dbReference type="EC" id="1.18.6.1"/>
<dbReference type="EMBL" id="AF058784">
    <property type="protein sequence ID" value="AAC14341.1"/>
    <property type="molecule type" value="Genomic_DNA"/>
</dbReference>
<dbReference type="SMR" id="O68954"/>
<dbReference type="GO" id="GO:0005524">
    <property type="term" value="F:ATP binding"/>
    <property type="evidence" value="ECO:0007669"/>
    <property type="project" value="UniProtKB-KW"/>
</dbReference>
<dbReference type="GO" id="GO:0051536">
    <property type="term" value="F:iron-sulfur cluster binding"/>
    <property type="evidence" value="ECO:0007669"/>
    <property type="project" value="UniProtKB-KW"/>
</dbReference>
<dbReference type="GO" id="GO:0046872">
    <property type="term" value="F:metal ion binding"/>
    <property type="evidence" value="ECO:0007669"/>
    <property type="project" value="UniProtKB-KW"/>
</dbReference>
<dbReference type="GO" id="GO:0016163">
    <property type="term" value="F:nitrogenase activity"/>
    <property type="evidence" value="ECO:0007669"/>
    <property type="project" value="UniProtKB-EC"/>
</dbReference>
<dbReference type="GO" id="GO:0009399">
    <property type="term" value="P:nitrogen fixation"/>
    <property type="evidence" value="ECO:0007669"/>
    <property type="project" value="UniProtKB-KW"/>
</dbReference>
<dbReference type="Gene3D" id="3.40.50.12380">
    <property type="entry name" value="Nitrogenase MoFe cofactor biosynthesis protein NifE, C-terminal"/>
    <property type="match status" value="1"/>
</dbReference>
<dbReference type="Gene3D" id="3.40.50.1980">
    <property type="entry name" value="Nitrogenase molybdenum iron protein domain"/>
    <property type="match status" value="1"/>
</dbReference>
<dbReference type="InterPro" id="IPR000510">
    <property type="entry name" value="Nase/OxRdtase_comp1"/>
</dbReference>
<dbReference type="InterPro" id="IPR005974">
    <property type="entry name" value="Nase_asu"/>
</dbReference>
<dbReference type="InterPro" id="IPR010143">
    <property type="entry name" value="Nase_comp1_asu"/>
</dbReference>
<dbReference type="InterPro" id="IPR000318">
    <property type="entry name" value="Nase_comp1_CS"/>
</dbReference>
<dbReference type="NCBIfam" id="TIGR01284">
    <property type="entry name" value="alt_nitrog_alph"/>
    <property type="match status" value="1"/>
</dbReference>
<dbReference type="PANTHER" id="PTHR43457">
    <property type="entry name" value="NITROGENASE MOLYBDENUM-IRON PROTEIN ALPHA CHAIN"/>
    <property type="match status" value="1"/>
</dbReference>
<dbReference type="PANTHER" id="PTHR43457:SF1">
    <property type="entry name" value="NITROGENASE MOLYBDENUM-IRON PROTEIN ALPHA CHAIN"/>
    <property type="match status" value="1"/>
</dbReference>
<dbReference type="Pfam" id="PF00148">
    <property type="entry name" value="Oxidored_nitro"/>
    <property type="match status" value="1"/>
</dbReference>
<dbReference type="SUPFAM" id="SSF53807">
    <property type="entry name" value="Helical backbone' metal receptor"/>
    <property type="match status" value="1"/>
</dbReference>
<dbReference type="PROSITE" id="PS00699">
    <property type="entry name" value="NITROGENASE_1_1"/>
    <property type="match status" value="1"/>
</dbReference>
<dbReference type="PROSITE" id="PS00090">
    <property type="entry name" value="NITROGENASE_1_2"/>
    <property type="match status" value="1"/>
</dbReference>
<name>VNFD_AZOSA</name>
<evidence type="ECO:0000250" key="1"/>
<evidence type="ECO:0000305" key="2"/>
<gene>
    <name type="primary">vnfD</name>
</gene>
<feature type="chain" id="PRO_0000153057" description="Nitrogenase vanadium-iron protein alpha chain">
    <location>
        <begin position="1" status="less than"/>
        <end position="279" status="greater than"/>
    </location>
</feature>
<feature type="binding site" evidence="1">
    <location>
        <position position="5"/>
    </location>
    <ligand>
        <name>[8Fe-7S] cluster</name>
        <dbReference type="ChEBI" id="CHEBI:21143"/>
        <note>ligand shared with beta chain</note>
    </ligand>
</feature>
<feature type="binding site" evidence="1">
    <location>
        <position position="31"/>
    </location>
    <ligand>
        <name>[8Fe-7S] cluster</name>
        <dbReference type="ChEBI" id="CHEBI:21143"/>
        <note>ligand shared with beta chain</note>
    </ligand>
</feature>
<feature type="binding site" evidence="1">
    <location>
        <position position="94"/>
    </location>
    <ligand>
        <name>[8Fe-7S] cluster</name>
        <dbReference type="ChEBI" id="CHEBI:21143"/>
        <note>ligand shared with beta chain</note>
    </ligand>
</feature>
<feature type="binding site" evidence="1">
    <location>
        <position position="213"/>
    </location>
    <ligand>
        <name>[7Fe-V-9S-C-homocitryl] cluster</name>
        <dbReference type="ChEBI" id="CHEBI:60357"/>
    </ligand>
</feature>
<feature type="non-terminal residue">
    <location>
        <position position="1"/>
    </location>
</feature>
<feature type="non-terminal residue">
    <location>
        <position position="279"/>
    </location>
</feature>
<keyword id="KW-0067">ATP-binding</keyword>
<keyword id="KW-0408">Iron</keyword>
<keyword id="KW-0411">Iron-sulfur</keyword>
<keyword id="KW-0479">Metal-binding</keyword>
<keyword id="KW-0535">Nitrogen fixation</keyword>
<keyword id="KW-0547">Nucleotide-binding</keyword>
<keyword id="KW-0560">Oxidoreductase</keyword>
<keyword id="KW-0837">Vanadium</keyword>
<reference key="1">
    <citation type="journal article" date="1999" name="Can. J. Microbiol.">
        <title>Identification of genes unique to Mo-independent nitrogenase systems in diverse diazotrophs.</title>
        <authorList>
            <person name="Loveless T.M."/>
            <person name="Bishop P.E."/>
        </authorList>
    </citation>
    <scope>NUCLEOTIDE SEQUENCE [GENOMIC DNA]</scope>
</reference>
<accession>O68954</accession>
<comment type="function">
    <text>This vanadium-iron protein is part of the nitrogenase complex that catalyzes the key enzymatic reactions in nitrogen fixation.</text>
</comment>
<comment type="catalytic activity">
    <reaction>
        <text>N2 + 8 reduced [2Fe-2S]-[ferredoxin] + 16 ATP + 16 H2O = H2 + 8 oxidized [2Fe-2S]-[ferredoxin] + 2 NH4(+) + 16 ADP + 16 phosphate + 6 H(+)</text>
        <dbReference type="Rhea" id="RHEA:21448"/>
        <dbReference type="Rhea" id="RHEA-COMP:10000"/>
        <dbReference type="Rhea" id="RHEA-COMP:10001"/>
        <dbReference type="ChEBI" id="CHEBI:15377"/>
        <dbReference type="ChEBI" id="CHEBI:15378"/>
        <dbReference type="ChEBI" id="CHEBI:17997"/>
        <dbReference type="ChEBI" id="CHEBI:18276"/>
        <dbReference type="ChEBI" id="CHEBI:28938"/>
        <dbReference type="ChEBI" id="CHEBI:30616"/>
        <dbReference type="ChEBI" id="CHEBI:33737"/>
        <dbReference type="ChEBI" id="CHEBI:33738"/>
        <dbReference type="ChEBI" id="CHEBI:43474"/>
        <dbReference type="ChEBI" id="CHEBI:456216"/>
        <dbReference type="EC" id="1.18.6.1"/>
    </reaction>
</comment>
<comment type="cofactor">
    <cofactor evidence="1">
        <name>[8Fe-7S] cluster</name>
        <dbReference type="ChEBI" id="CHEBI:21143"/>
    </cofactor>
    <text evidence="1">Binds 1 [8Fe-7S] cluster per heterodimer.</text>
</comment>
<comment type="cofactor">
    <cofactor evidence="1">
        <name>[7Fe-V-9S-C-homocitryl] cluster</name>
        <dbReference type="ChEBI" id="CHEBI:60357"/>
    </cofactor>
    <text evidence="1">Binds 1 [7Fe-V-9S-C-homocitryl] cluster per subunit.</text>
</comment>
<comment type="subunit">
    <text evidence="1">Hexamer of two alpha, two beta, and two delta chains.</text>
</comment>
<comment type="miscellaneous">
    <text>The structure of the 7Fe-V-9S-C-homocitryl cluster is assumed to be analogous to the 7Fe-Mo-9S-C-homocitryl cluster.</text>
</comment>
<comment type="similarity">
    <text evidence="2">Belongs to the NifD/NifK/NifE/NifN family.</text>
</comment>
<organism>
    <name type="scientific">Azotobacter salinestris</name>
    <dbReference type="NCBI Taxonomy" id="69964"/>
    <lineage>
        <taxon>Bacteria</taxon>
        <taxon>Pseudomonadati</taxon>
        <taxon>Pseudomonadota</taxon>
        <taxon>Gammaproteobacteria</taxon>
        <taxon>Pseudomonadales</taxon>
        <taxon>Pseudomonadaceae</taxon>
        <taxon>Azotobacter</taxon>
    </lineage>
</organism>
<protein>
    <recommendedName>
        <fullName>Nitrogenase vanadium-iron protein alpha chain</fullName>
        <ecNumber>1.18.6.1</ecNumber>
    </recommendedName>
    <alternativeName>
        <fullName>Dinitrogenase 2 subunit alpha</fullName>
    </alternativeName>
    <alternativeName>
        <fullName>Nitrogenase component I</fullName>
    </alternativeName>
</protein>
<sequence length="279" mass="31795">SERGCAFCGAKLVIGGVLKDTIQMIHGPLGCAYDTWHTKRYPTDNGHFNMKYVWSTDMKESHVVFGGEKRLEKSMHEAFDEMPDIKRMIVYTTCPTALIGDDIKAVAKKVMKDRPDVDVFTVECPGFSGVSQSKGHHVLNIGWINEKVETMEKEITSEYTMNFIGDFNIQGDTQLLQTYWDRLGIQVVAHFTGNGTYDDLRCMHQAQLNVVNCARSSGYIANELKKRYGIPRLDIDSWGFNYMAEGIRKICAFFGIEEKGEALIAEEYAKWKPKLDWYK</sequence>